<name>TEG4_EHV1V</name>
<comment type="function">
    <text evidence="1">May participate in DNA packaging/capsid maturation events. Promotes efficient incorporation of tegument proteins UL46, UL49, and US3 homologs into virions. May also play a role in capsid transport to the trans-Golgi network (TGN) (By similarity).</text>
</comment>
<comment type="subunit">
    <text evidence="1">Interacts (via C-terminus) with UL16.</text>
</comment>
<comment type="subcellular location">
    <subcellularLocation>
        <location evidence="1">Virion tegument</location>
    </subcellularLocation>
    <subcellularLocation>
        <location evidence="1">Host cytoplasm</location>
    </subcellularLocation>
    <subcellularLocation>
        <location evidence="1">Host nucleus</location>
    </subcellularLocation>
</comment>
<comment type="similarity">
    <text evidence="2">Belongs to the alphaherpesvirinae UL21 protein family.</text>
</comment>
<organismHost>
    <name type="scientific">Equus caballus</name>
    <name type="common">Horse</name>
    <dbReference type="NCBI Taxonomy" id="9796"/>
</organismHost>
<gene>
    <name type="ordered locus">40</name>
</gene>
<accession>Q6S6T1</accession>
<reference evidence="2 3" key="1">
    <citation type="submission" date="2003-11" db="EMBL/GenBank/DDBJ databases">
        <authorList>
            <person name="Davis-Poynter N."/>
            <person name="Nugent J."/>
            <person name="Birch-Machin I."/>
            <person name="Allen G.P."/>
        </authorList>
    </citation>
    <scope>NUCLEOTIDE SEQUENCE [LARGE SCALE GENOMIC DNA]</scope>
</reference>
<sequence length="530" mass="57896">MDFKYSDTVIHNGVVFYITDGGHRVYFLYGGCLLSVPRPHATAESGEIAKFGLTLRGLTHNDRVVANYVRSELNRTGRHESAPSSEEDVFVDRLEVLAQGAQAFGRDICGSFDLEVYDPYLAECMVSLKVTSGLIVSTGRDIPQDGMLHLYTVPTITNASSGFIYTPNIACFTLVQAYLTELPPELETLISGLFDHIPVARPPLRDESGGHSRTDIIVTSPRAVKTMAIGGTTRCSKRPLRKTVVSDFVQVRLIPKPCSIWDSASRVASGASLQSLQLLFKIADEIILIEEPWPGLDEHLNQARSTIVDAILAVYGNEGKLRFFGGKLTQQGVTTLQRFVLCQFILGKWNLINCYAALEQLAESYIGAVPEARDPLPDPHLVADAVNEIIRESGILGELCEIIVRYTQPTDPVNGSGSEVVELEARLLAEFAANATRVELGLSSYDEVRNMEARIASVLNKLYAKDGIGGAAQVACRILGSGLPVAIVLNVSSITAFDGLDLSRKGAYYLYYLLSERLKRGGVTVHVSRK</sequence>
<dbReference type="EMBL" id="AY464052">
    <property type="protein sequence ID" value="AAS45925.1"/>
    <property type="molecule type" value="Genomic_DNA"/>
</dbReference>
<dbReference type="SMR" id="Q6S6T1"/>
<dbReference type="Proteomes" id="UP000008296">
    <property type="component" value="Segment"/>
</dbReference>
<dbReference type="GO" id="GO:0030430">
    <property type="term" value="C:host cell cytoplasm"/>
    <property type="evidence" value="ECO:0007669"/>
    <property type="project" value="UniProtKB-SubCell"/>
</dbReference>
<dbReference type="GO" id="GO:0042025">
    <property type="term" value="C:host cell nucleus"/>
    <property type="evidence" value="ECO:0007669"/>
    <property type="project" value="UniProtKB-SubCell"/>
</dbReference>
<dbReference type="GO" id="GO:0019033">
    <property type="term" value="C:viral tegument"/>
    <property type="evidence" value="ECO:0007669"/>
    <property type="project" value="UniProtKB-SubCell"/>
</dbReference>
<dbReference type="InterPro" id="IPR004936">
    <property type="entry name" value="Herpes_UL21"/>
</dbReference>
<dbReference type="Pfam" id="PF03252">
    <property type="entry name" value="Herpes_UL21"/>
    <property type="match status" value="1"/>
</dbReference>
<evidence type="ECO:0000250" key="1"/>
<evidence type="ECO:0000305" key="2"/>
<evidence type="ECO:0000312" key="3">
    <source>
        <dbReference type="EMBL" id="AAS45925.1"/>
    </source>
</evidence>
<feature type="chain" id="PRO_0000115975" description="Tegument protein UL21 homolog">
    <location>
        <begin position="1"/>
        <end position="530"/>
    </location>
</feature>
<protein>
    <recommendedName>
        <fullName>Tegument protein UL21 homolog</fullName>
    </recommendedName>
</protein>
<proteinExistence type="inferred from homology"/>
<keyword id="KW-1035">Host cytoplasm</keyword>
<keyword id="KW-1048">Host nucleus</keyword>
<keyword id="KW-0946">Virion</keyword>
<keyword id="KW-0920">Virion tegument</keyword>
<organism>
    <name type="scientific">Equine herpesvirus 1 (strain V592)</name>
    <name type="common">EHV-1</name>
    <name type="synonym">Equine abortion virus</name>
    <dbReference type="NCBI Taxonomy" id="310273"/>
    <lineage>
        <taxon>Viruses</taxon>
        <taxon>Duplodnaviria</taxon>
        <taxon>Heunggongvirae</taxon>
        <taxon>Peploviricota</taxon>
        <taxon>Herviviricetes</taxon>
        <taxon>Herpesvirales</taxon>
        <taxon>Orthoherpesviridae</taxon>
        <taxon>Alphaherpesvirinae</taxon>
        <taxon>Varicellovirus</taxon>
        <taxon>Varicellovirus equidalpha1</taxon>
        <taxon>Equid alphaherpesvirus 1</taxon>
    </lineage>
</organism>